<accession>Q8TKB4</accession>
<comment type="catalytic activity">
    <reaction>
        <text>L-arginine + H(+) = agmatine + CO2</text>
        <dbReference type="Rhea" id="RHEA:17641"/>
        <dbReference type="ChEBI" id="CHEBI:15378"/>
        <dbReference type="ChEBI" id="CHEBI:16526"/>
        <dbReference type="ChEBI" id="CHEBI:32682"/>
        <dbReference type="ChEBI" id="CHEBI:58145"/>
        <dbReference type="EC" id="4.1.1.19"/>
    </reaction>
</comment>
<comment type="cofactor">
    <cofactor evidence="1">
        <name>pyruvate</name>
        <dbReference type="ChEBI" id="CHEBI:15361"/>
    </cofactor>
    <text evidence="1">Binds 1 pyruvoyl group covalently per subunit.</text>
</comment>
<comment type="similarity">
    <text evidence="2">Belongs to the PdaD family.</text>
</comment>
<organism>
    <name type="scientific">Methanosarcina acetivorans (strain ATCC 35395 / DSM 2834 / JCM 12185 / C2A)</name>
    <dbReference type="NCBI Taxonomy" id="188937"/>
    <lineage>
        <taxon>Archaea</taxon>
        <taxon>Methanobacteriati</taxon>
        <taxon>Methanobacteriota</taxon>
        <taxon>Stenosarchaea group</taxon>
        <taxon>Methanomicrobia</taxon>
        <taxon>Methanosarcinales</taxon>
        <taxon>Methanosarcinaceae</taxon>
        <taxon>Methanosarcina</taxon>
    </lineage>
</organism>
<name>PDAD2_METAC</name>
<dbReference type="EC" id="4.1.1.19"/>
<dbReference type="EMBL" id="AE010299">
    <property type="protein sequence ID" value="AAM06861.1"/>
    <property type="molecule type" value="Genomic_DNA"/>
</dbReference>
<dbReference type="RefSeq" id="WP_011023416.1">
    <property type="nucleotide sequence ID" value="NC_003552.1"/>
</dbReference>
<dbReference type="SMR" id="Q8TKB4"/>
<dbReference type="STRING" id="188937.MA_3496"/>
<dbReference type="EnsemblBacteria" id="AAM06861">
    <property type="protein sequence ID" value="AAM06861"/>
    <property type="gene ID" value="MA_3496"/>
</dbReference>
<dbReference type="GeneID" id="1475390"/>
<dbReference type="KEGG" id="mac:MA_3496"/>
<dbReference type="HOGENOM" id="CLU_114389_0_0_2"/>
<dbReference type="InParanoid" id="Q8TKB4"/>
<dbReference type="OrthoDB" id="30748at2157"/>
<dbReference type="PhylomeDB" id="Q8TKB4"/>
<dbReference type="Proteomes" id="UP000002487">
    <property type="component" value="Chromosome"/>
</dbReference>
<dbReference type="GO" id="GO:0008792">
    <property type="term" value="F:arginine decarboxylase activity"/>
    <property type="evidence" value="ECO:0007669"/>
    <property type="project" value="UniProtKB-UniRule"/>
</dbReference>
<dbReference type="GO" id="GO:0006527">
    <property type="term" value="P:arginine catabolic process"/>
    <property type="evidence" value="ECO:0007669"/>
    <property type="project" value="InterPro"/>
</dbReference>
<dbReference type="Gene3D" id="3.50.20.10">
    <property type="entry name" value="Pyruvoyl-Dependent Histidine Decarboxylase, subunit B"/>
    <property type="match status" value="1"/>
</dbReference>
<dbReference type="HAMAP" id="MF_01404">
    <property type="entry name" value="PvlArgDC"/>
    <property type="match status" value="1"/>
</dbReference>
<dbReference type="InterPro" id="IPR016104">
    <property type="entry name" value="Pyr-dep_his/arg-deCO2ase"/>
</dbReference>
<dbReference type="InterPro" id="IPR016105">
    <property type="entry name" value="Pyr-dep_his/arg-deCO2ase_sand"/>
</dbReference>
<dbReference type="InterPro" id="IPR002724">
    <property type="entry name" value="Pyruvoyl-dep_arg_deCO2ase"/>
</dbReference>
<dbReference type="NCBIfam" id="TIGR00286">
    <property type="entry name" value="pyruvoyl-dependent arginine decarboxylase"/>
    <property type="match status" value="1"/>
</dbReference>
<dbReference type="PANTHER" id="PTHR40438">
    <property type="entry name" value="PYRUVOYL-DEPENDENT ARGININE DECARBOXYLASE"/>
    <property type="match status" value="1"/>
</dbReference>
<dbReference type="PANTHER" id="PTHR40438:SF1">
    <property type="entry name" value="PYRUVOYL-DEPENDENT ARGININE DECARBOXYLASE"/>
    <property type="match status" value="1"/>
</dbReference>
<dbReference type="Pfam" id="PF01862">
    <property type="entry name" value="PvlArgDC"/>
    <property type="match status" value="1"/>
</dbReference>
<dbReference type="PIRSF" id="PIRSF005216">
    <property type="entry name" value="Pyruvoyl-dep_arg_deCO2ase"/>
    <property type="match status" value="1"/>
</dbReference>
<dbReference type="SFLD" id="SFLDG01170">
    <property type="entry name" value="Pyruvoyl-dependent_arginine_de"/>
    <property type="match status" value="1"/>
</dbReference>
<dbReference type="SFLD" id="SFLDS00055">
    <property type="entry name" value="Pyruvoyl-Dependent_Histidine/A"/>
    <property type="match status" value="1"/>
</dbReference>
<dbReference type="SUPFAM" id="SSF56271">
    <property type="entry name" value="Pyruvoyl-dependent histidine and arginine decarboxylases"/>
    <property type="match status" value="1"/>
</dbReference>
<sequence>MIPRKAFLTKGTGVHKDRLASFELALRDAKIEKYNLVSVSSILPPNCKLVTREEGLSELKPGAIVHCVLARNDTNEPHRLMASAIGTAVPVNEDNYGYISEHHSFGEEEIIAGEYAEDLAATMLATTLGIEFNAEMAWHEREQVYKASGHIFDTFHICQTAAGDKNGKWTTVVAAMVFVTSKC</sequence>
<reference key="1">
    <citation type="journal article" date="2002" name="Genome Res.">
        <title>The genome of Methanosarcina acetivorans reveals extensive metabolic and physiological diversity.</title>
        <authorList>
            <person name="Galagan J.E."/>
            <person name="Nusbaum C."/>
            <person name="Roy A."/>
            <person name="Endrizzi M.G."/>
            <person name="Macdonald P."/>
            <person name="FitzHugh W."/>
            <person name="Calvo S."/>
            <person name="Engels R."/>
            <person name="Smirnov S."/>
            <person name="Atnoor D."/>
            <person name="Brown A."/>
            <person name="Allen N."/>
            <person name="Naylor J."/>
            <person name="Stange-Thomann N."/>
            <person name="DeArellano K."/>
            <person name="Johnson R."/>
            <person name="Linton L."/>
            <person name="McEwan P."/>
            <person name="McKernan K."/>
            <person name="Talamas J."/>
            <person name="Tirrell A."/>
            <person name="Ye W."/>
            <person name="Zimmer A."/>
            <person name="Barber R.D."/>
            <person name="Cann I."/>
            <person name="Graham D.E."/>
            <person name="Grahame D.A."/>
            <person name="Guss A.M."/>
            <person name="Hedderich R."/>
            <person name="Ingram-Smith C."/>
            <person name="Kuettner H.C."/>
            <person name="Krzycki J.A."/>
            <person name="Leigh J.A."/>
            <person name="Li W."/>
            <person name="Liu J."/>
            <person name="Mukhopadhyay B."/>
            <person name="Reeve J.N."/>
            <person name="Smith K."/>
            <person name="Springer T.A."/>
            <person name="Umayam L.A."/>
            <person name="White O."/>
            <person name="White R.H."/>
            <person name="de Macario E.C."/>
            <person name="Ferry J.G."/>
            <person name="Jarrell K.F."/>
            <person name="Jing H."/>
            <person name="Macario A.J.L."/>
            <person name="Paulsen I.T."/>
            <person name="Pritchett M."/>
            <person name="Sowers K.R."/>
            <person name="Swanson R.V."/>
            <person name="Zinder S.H."/>
            <person name="Lander E."/>
            <person name="Metcalf W.W."/>
            <person name="Birren B."/>
        </authorList>
    </citation>
    <scope>NUCLEOTIDE SEQUENCE [LARGE SCALE GENOMIC DNA]</scope>
    <source>
        <strain>ATCC 35395 / DSM 2834 / JCM 12185 / C2A</strain>
    </source>
</reference>
<evidence type="ECO:0000250" key="1"/>
<evidence type="ECO:0000305" key="2"/>
<proteinExistence type="inferred from homology"/>
<gene>
    <name type="primary">pdaD2</name>
    <name type="ordered locus">MA_3496</name>
</gene>
<protein>
    <recommendedName>
        <fullName>Pyruvoyl-dependent arginine decarboxylase 2</fullName>
        <shortName>PvlArgDC 2</shortName>
        <ecNumber>4.1.1.19</ecNumber>
    </recommendedName>
    <component>
        <recommendedName>
            <fullName>Pyruvoyl-dependent arginine decarboxylase 2 subunit beta</fullName>
        </recommendedName>
    </component>
    <component>
        <recommendedName>
            <fullName>Pyruvoyl-dependent arginine decarboxylase 2 subunit alpha</fullName>
        </recommendedName>
    </component>
</protein>
<feature type="chain" id="PRO_0000023312" description="Pyruvoyl-dependent arginine decarboxylase 2 subunit beta" evidence="1">
    <location>
        <begin position="1"/>
        <end position="40"/>
    </location>
</feature>
<feature type="chain" id="PRO_0000023313" description="Pyruvoyl-dependent arginine decarboxylase 2 subunit alpha" evidence="1">
    <location>
        <begin position="41"/>
        <end position="183"/>
    </location>
</feature>
<feature type="site" description="Cleavage (non-hydrolytic)" evidence="1">
    <location>
        <begin position="40"/>
        <end position="41"/>
    </location>
</feature>
<feature type="modified residue" description="Pyruvic acid (Ser)" evidence="1">
    <location>
        <position position="41"/>
    </location>
</feature>
<keyword id="KW-0210">Decarboxylase</keyword>
<keyword id="KW-0456">Lyase</keyword>
<keyword id="KW-0670">Pyruvate</keyword>
<keyword id="KW-1185">Reference proteome</keyword>